<sequence>MTDKTEKVAVDPETVFKRPRECDSPSYQKRQRMALLARKQGAGDSLIAGSAMSKEKKLMTGHAIPPSQLDSQIDDFTGFSKDRMMQKPGSNAPVGGNVTSSFSGDDLECRETAFSPKSQQEINADIKRQLVKELRCVGQKYEKIFEMLEGVQGPTAVRKRFFESIIKEAARCMRRDFVKHLKKKLKRMI</sequence>
<gene>
    <name evidence="2" type="primary">CT45A9</name>
</gene>
<protein>
    <recommendedName>
        <fullName evidence="2">Cancer/testis antigen family 45 member A9</fullName>
    </recommendedName>
    <alternativeName>
        <fullName evidence="1">Cancer/testis antigen 45A9</fullName>
    </alternativeName>
</protein>
<reference key="1">
    <citation type="journal article" date="2005" name="Nature">
        <title>The DNA sequence of the human X chromosome.</title>
        <authorList>
            <person name="Ross M.T."/>
            <person name="Grafham D.V."/>
            <person name="Coffey A.J."/>
            <person name="Scherer S."/>
            <person name="McLay K."/>
            <person name="Muzny D."/>
            <person name="Platzer M."/>
            <person name="Howell G.R."/>
            <person name="Burrows C."/>
            <person name="Bird C.P."/>
            <person name="Frankish A."/>
            <person name="Lovell F.L."/>
            <person name="Howe K.L."/>
            <person name="Ashurst J.L."/>
            <person name="Fulton R.S."/>
            <person name="Sudbrak R."/>
            <person name="Wen G."/>
            <person name="Jones M.C."/>
            <person name="Hurles M.E."/>
            <person name="Andrews T.D."/>
            <person name="Scott C.E."/>
            <person name="Searle S."/>
            <person name="Ramser J."/>
            <person name="Whittaker A."/>
            <person name="Deadman R."/>
            <person name="Carter N.P."/>
            <person name="Hunt S.E."/>
            <person name="Chen R."/>
            <person name="Cree A."/>
            <person name="Gunaratne P."/>
            <person name="Havlak P."/>
            <person name="Hodgson A."/>
            <person name="Metzker M.L."/>
            <person name="Richards S."/>
            <person name="Scott G."/>
            <person name="Steffen D."/>
            <person name="Sodergren E."/>
            <person name="Wheeler D.A."/>
            <person name="Worley K.C."/>
            <person name="Ainscough R."/>
            <person name="Ambrose K.D."/>
            <person name="Ansari-Lari M.A."/>
            <person name="Aradhya S."/>
            <person name="Ashwell R.I."/>
            <person name="Babbage A.K."/>
            <person name="Bagguley C.L."/>
            <person name="Ballabio A."/>
            <person name="Banerjee R."/>
            <person name="Barker G.E."/>
            <person name="Barlow K.F."/>
            <person name="Barrett I.P."/>
            <person name="Bates K.N."/>
            <person name="Beare D.M."/>
            <person name="Beasley H."/>
            <person name="Beasley O."/>
            <person name="Beck A."/>
            <person name="Bethel G."/>
            <person name="Blechschmidt K."/>
            <person name="Brady N."/>
            <person name="Bray-Allen S."/>
            <person name="Bridgeman A.M."/>
            <person name="Brown A.J."/>
            <person name="Brown M.J."/>
            <person name="Bonnin D."/>
            <person name="Bruford E.A."/>
            <person name="Buhay C."/>
            <person name="Burch P."/>
            <person name="Burford D."/>
            <person name="Burgess J."/>
            <person name="Burrill W."/>
            <person name="Burton J."/>
            <person name="Bye J.M."/>
            <person name="Carder C."/>
            <person name="Carrel L."/>
            <person name="Chako J."/>
            <person name="Chapman J.C."/>
            <person name="Chavez D."/>
            <person name="Chen E."/>
            <person name="Chen G."/>
            <person name="Chen Y."/>
            <person name="Chen Z."/>
            <person name="Chinault C."/>
            <person name="Ciccodicola A."/>
            <person name="Clark S.Y."/>
            <person name="Clarke G."/>
            <person name="Clee C.M."/>
            <person name="Clegg S."/>
            <person name="Clerc-Blankenburg K."/>
            <person name="Clifford K."/>
            <person name="Cobley V."/>
            <person name="Cole C.G."/>
            <person name="Conquer J.S."/>
            <person name="Corby N."/>
            <person name="Connor R.E."/>
            <person name="David R."/>
            <person name="Davies J."/>
            <person name="Davis C."/>
            <person name="Davis J."/>
            <person name="Delgado O."/>
            <person name="Deshazo D."/>
            <person name="Dhami P."/>
            <person name="Ding Y."/>
            <person name="Dinh H."/>
            <person name="Dodsworth S."/>
            <person name="Draper H."/>
            <person name="Dugan-Rocha S."/>
            <person name="Dunham A."/>
            <person name="Dunn M."/>
            <person name="Durbin K.J."/>
            <person name="Dutta I."/>
            <person name="Eades T."/>
            <person name="Ellwood M."/>
            <person name="Emery-Cohen A."/>
            <person name="Errington H."/>
            <person name="Evans K.L."/>
            <person name="Faulkner L."/>
            <person name="Francis F."/>
            <person name="Frankland J."/>
            <person name="Fraser A.E."/>
            <person name="Galgoczy P."/>
            <person name="Gilbert J."/>
            <person name="Gill R."/>
            <person name="Gloeckner G."/>
            <person name="Gregory S.G."/>
            <person name="Gribble S."/>
            <person name="Griffiths C."/>
            <person name="Grocock R."/>
            <person name="Gu Y."/>
            <person name="Gwilliam R."/>
            <person name="Hamilton C."/>
            <person name="Hart E.A."/>
            <person name="Hawes A."/>
            <person name="Heath P.D."/>
            <person name="Heitmann K."/>
            <person name="Hennig S."/>
            <person name="Hernandez J."/>
            <person name="Hinzmann B."/>
            <person name="Ho S."/>
            <person name="Hoffs M."/>
            <person name="Howden P.J."/>
            <person name="Huckle E.J."/>
            <person name="Hume J."/>
            <person name="Hunt P.J."/>
            <person name="Hunt A.R."/>
            <person name="Isherwood J."/>
            <person name="Jacob L."/>
            <person name="Johnson D."/>
            <person name="Jones S."/>
            <person name="de Jong P.J."/>
            <person name="Joseph S.S."/>
            <person name="Keenan S."/>
            <person name="Kelly S."/>
            <person name="Kershaw J.K."/>
            <person name="Khan Z."/>
            <person name="Kioschis P."/>
            <person name="Klages S."/>
            <person name="Knights A.J."/>
            <person name="Kosiura A."/>
            <person name="Kovar-Smith C."/>
            <person name="Laird G.K."/>
            <person name="Langford C."/>
            <person name="Lawlor S."/>
            <person name="Leversha M."/>
            <person name="Lewis L."/>
            <person name="Liu W."/>
            <person name="Lloyd C."/>
            <person name="Lloyd D.M."/>
            <person name="Loulseged H."/>
            <person name="Loveland J.E."/>
            <person name="Lovell J.D."/>
            <person name="Lozado R."/>
            <person name="Lu J."/>
            <person name="Lyne R."/>
            <person name="Ma J."/>
            <person name="Maheshwari M."/>
            <person name="Matthews L.H."/>
            <person name="McDowall J."/>
            <person name="McLaren S."/>
            <person name="McMurray A."/>
            <person name="Meidl P."/>
            <person name="Meitinger T."/>
            <person name="Milne S."/>
            <person name="Miner G."/>
            <person name="Mistry S.L."/>
            <person name="Morgan M."/>
            <person name="Morris S."/>
            <person name="Mueller I."/>
            <person name="Mullikin J.C."/>
            <person name="Nguyen N."/>
            <person name="Nordsiek G."/>
            <person name="Nyakatura G."/>
            <person name="O'dell C.N."/>
            <person name="Okwuonu G."/>
            <person name="Palmer S."/>
            <person name="Pandian R."/>
            <person name="Parker D."/>
            <person name="Parrish J."/>
            <person name="Pasternak S."/>
            <person name="Patel D."/>
            <person name="Pearce A.V."/>
            <person name="Pearson D.M."/>
            <person name="Pelan S.E."/>
            <person name="Perez L."/>
            <person name="Porter K.M."/>
            <person name="Ramsey Y."/>
            <person name="Reichwald K."/>
            <person name="Rhodes S."/>
            <person name="Ridler K.A."/>
            <person name="Schlessinger D."/>
            <person name="Schueler M.G."/>
            <person name="Sehra H.K."/>
            <person name="Shaw-Smith C."/>
            <person name="Shen H."/>
            <person name="Sheridan E.M."/>
            <person name="Shownkeen R."/>
            <person name="Skuce C.D."/>
            <person name="Smith M.L."/>
            <person name="Sotheran E.C."/>
            <person name="Steingruber H.E."/>
            <person name="Steward C.A."/>
            <person name="Storey R."/>
            <person name="Swann R.M."/>
            <person name="Swarbreck D."/>
            <person name="Tabor P.E."/>
            <person name="Taudien S."/>
            <person name="Taylor T."/>
            <person name="Teague B."/>
            <person name="Thomas K."/>
            <person name="Thorpe A."/>
            <person name="Timms K."/>
            <person name="Tracey A."/>
            <person name="Trevanion S."/>
            <person name="Tromans A.C."/>
            <person name="d'Urso M."/>
            <person name="Verduzco D."/>
            <person name="Villasana D."/>
            <person name="Waldron L."/>
            <person name="Wall M."/>
            <person name="Wang Q."/>
            <person name="Warren J."/>
            <person name="Warry G.L."/>
            <person name="Wei X."/>
            <person name="West A."/>
            <person name="Whitehead S.L."/>
            <person name="Whiteley M.N."/>
            <person name="Wilkinson J.E."/>
            <person name="Willey D.L."/>
            <person name="Williams G."/>
            <person name="Williams L."/>
            <person name="Williamson A."/>
            <person name="Williamson H."/>
            <person name="Wilming L."/>
            <person name="Woodmansey R.L."/>
            <person name="Wray P.W."/>
            <person name="Yen J."/>
            <person name="Zhang J."/>
            <person name="Zhou J."/>
            <person name="Zoghbi H."/>
            <person name="Zorilla S."/>
            <person name="Buck D."/>
            <person name="Reinhardt R."/>
            <person name="Poustka A."/>
            <person name="Rosenthal A."/>
            <person name="Lehrach H."/>
            <person name="Meindl A."/>
            <person name="Minx P.J."/>
            <person name="Hillier L.W."/>
            <person name="Willard H.F."/>
            <person name="Wilson R.K."/>
            <person name="Waterston R.H."/>
            <person name="Rice C.M."/>
            <person name="Vaudin M."/>
            <person name="Coulson A."/>
            <person name="Nelson D.L."/>
            <person name="Weinstock G."/>
            <person name="Sulston J.E."/>
            <person name="Durbin R.M."/>
            <person name="Hubbard T."/>
            <person name="Gibbs R.A."/>
            <person name="Beck S."/>
            <person name="Rogers J."/>
            <person name="Bentley D.R."/>
        </authorList>
    </citation>
    <scope>NUCLEOTIDE SEQUENCE [LARGE SCALE GENOMIC DNA]</scope>
</reference>
<organism>
    <name type="scientific">Homo sapiens</name>
    <name type="common">Human</name>
    <dbReference type="NCBI Taxonomy" id="9606"/>
    <lineage>
        <taxon>Eukaryota</taxon>
        <taxon>Metazoa</taxon>
        <taxon>Chordata</taxon>
        <taxon>Craniata</taxon>
        <taxon>Vertebrata</taxon>
        <taxon>Euteleostomi</taxon>
        <taxon>Mammalia</taxon>
        <taxon>Eutheria</taxon>
        <taxon>Euarchontoglires</taxon>
        <taxon>Primates</taxon>
        <taxon>Haplorrhini</taxon>
        <taxon>Catarrhini</taxon>
        <taxon>Hominidae</taxon>
        <taxon>Homo</taxon>
    </lineage>
</organism>
<accession>P0DMV2</accession>
<feature type="chain" id="PRO_0000433031" description="Cancer/testis antigen family 45 member A9">
    <location>
        <begin position="1"/>
        <end position="189"/>
    </location>
</feature>
<name>CT459_HUMAN</name>
<dbReference type="EMBL" id="AC240441">
    <property type="status" value="NOT_ANNOTATED_CDS"/>
    <property type="molecule type" value="Genomic_DNA"/>
</dbReference>
<dbReference type="CCDS" id="CCDS76034.1"/>
<dbReference type="RefSeq" id="NP_001278464.1">
    <property type="nucleotide sequence ID" value="NM_001291535.1"/>
</dbReference>
<dbReference type="RefSeq" id="NP_001278469.1">
    <property type="nucleotide sequence ID" value="NM_001291540.2"/>
</dbReference>
<dbReference type="RefSeq" id="NP_001308200.1">
    <property type="nucleotide sequence ID" value="NM_001321271.1"/>
</dbReference>
<dbReference type="RefSeq" id="NP_689795.4">
    <property type="nucleotide sequence ID" value="NM_152582.6"/>
</dbReference>
<dbReference type="RefSeq" id="XP_006724846.1">
    <property type="nucleotide sequence ID" value="XM_006724783.2"/>
</dbReference>
<dbReference type="RefSeq" id="XP_006724859.1">
    <property type="nucleotide sequence ID" value="XM_006724796.3"/>
</dbReference>
<dbReference type="RefSeq" id="XP_006724862.1">
    <property type="nucleotide sequence ID" value="XM_006724799.2"/>
</dbReference>
<dbReference type="RefSeq" id="XP_011529543.1">
    <property type="nucleotide sequence ID" value="XM_011531241.2"/>
</dbReference>
<dbReference type="RefSeq" id="XP_011529691.1">
    <property type="nucleotide sequence ID" value="XM_011531389.2"/>
</dbReference>
<dbReference type="SMR" id="P0DMV2"/>
<dbReference type="IntAct" id="P0DMV2">
    <property type="interactions" value="1"/>
</dbReference>
<dbReference type="iPTMnet" id="P0DMV2"/>
<dbReference type="PhosphoSitePlus" id="P0DMV2"/>
<dbReference type="BioMuta" id="CT45A9"/>
<dbReference type="jPOST" id="P0DMV2"/>
<dbReference type="MassIVE" id="P0DMV2"/>
<dbReference type="Pumba" id="P0DMV2"/>
<dbReference type="Antibodypedia" id="80871">
    <property type="antibodies" value="1 antibodies from 1 providers"/>
</dbReference>
<dbReference type="DNASU" id="102723737"/>
<dbReference type="Ensembl" id="ENST00000604569.1">
    <property type="protein sequence ID" value="ENSP00000475060.1"/>
    <property type="gene ID" value="ENSG00000270946.6"/>
</dbReference>
<dbReference type="Ensembl" id="ENST00000620704.5">
    <property type="protein sequence ID" value="ENSP00000483637.1"/>
    <property type="gene ID" value="ENSG00000270946.6"/>
</dbReference>
<dbReference type="GeneID" id="102723680"/>
<dbReference type="GeneID" id="102723737"/>
<dbReference type="GeneID" id="728911"/>
<dbReference type="KEGG" id="hsa:102723680"/>
<dbReference type="KEGG" id="hsa:102723737"/>
<dbReference type="KEGG" id="hsa:728911"/>
<dbReference type="MANE-Select" id="ENST00000620704.5">
    <property type="protein sequence ID" value="ENSP00000483637.1"/>
    <property type="RefSeq nucleotide sequence ID" value="NM_001291540.2"/>
    <property type="RefSeq protein sequence ID" value="NP_001278469.1"/>
</dbReference>
<dbReference type="AGR" id="HGNC:28400"/>
<dbReference type="AGR" id="HGNC:51261"/>
<dbReference type="AGR" id="HGNC:51262"/>
<dbReference type="CTD" id="102723680"/>
<dbReference type="CTD" id="102723737"/>
<dbReference type="CTD" id="728911"/>
<dbReference type="DisGeNET" id="102723680"/>
<dbReference type="DisGeNET" id="102723737"/>
<dbReference type="DisGeNET" id="728911"/>
<dbReference type="GeneCards" id="CT45A9"/>
<dbReference type="HGNC" id="HGNC:51262">
    <property type="gene designation" value="CT45A9"/>
</dbReference>
<dbReference type="HPA" id="ENSG00000270946">
    <property type="expression patterns" value="Not detected"/>
</dbReference>
<dbReference type="neXtProt" id="NX_P0DMV2"/>
<dbReference type="OpenTargets" id="ENSG00000271449"/>
<dbReference type="VEuPathDB" id="HostDB:ENSG00000270946"/>
<dbReference type="InParanoid" id="P0DMV2"/>
<dbReference type="OrthoDB" id="9520782at2759"/>
<dbReference type="PAN-GO" id="P0DMV2">
    <property type="GO annotations" value="2 GO annotations based on evolutionary models"/>
</dbReference>
<dbReference type="PhylomeDB" id="P0DMV2"/>
<dbReference type="PathwayCommons" id="P0DMV2"/>
<dbReference type="BioGRID-ORCS" id="102723680">
    <property type="hits" value="4 hits in 86 CRISPR screens"/>
</dbReference>
<dbReference type="BioGRID-ORCS" id="102723737">
    <property type="hits" value="2 hits in 4 CRISPR screens"/>
</dbReference>
<dbReference type="BioGRID-ORCS" id="728911">
    <property type="hits" value="13 hits in 215 CRISPR screens"/>
</dbReference>
<dbReference type="Pharos" id="P0DMV2">
    <property type="development level" value="Tdark"/>
</dbReference>
<dbReference type="PRO" id="PR:P0DMV2"/>
<dbReference type="Proteomes" id="UP000005640">
    <property type="component" value="Chromosome X"/>
</dbReference>
<dbReference type="RNAct" id="P0DMV2">
    <property type="molecule type" value="protein"/>
</dbReference>
<dbReference type="Bgee" id="ENSG00000270946">
    <property type="expression patterns" value="Expressed in male germ line stem cell (sensu Vertebrata) in testis and 22 other cell types or tissues"/>
</dbReference>
<dbReference type="InterPro" id="IPR029307">
    <property type="entry name" value="INT_SG_DDX_CT_C"/>
</dbReference>
<dbReference type="InterPro" id="IPR051113">
    <property type="entry name" value="Integrator_subunit6"/>
</dbReference>
<dbReference type="PANTHER" id="PTHR12957">
    <property type="entry name" value="DEAD/H BOX POLYPEPTIDE 26/DICE1-RELATED"/>
    <property type="match status" value="1"/>
</dbReference>
<dbReference type="PANTHER" id="PTHR12957:SF2">
    <property type="entry name" value="INTEGRATOR COMPLEX SUBUNIT 6"/>
    <property type="match status" value="1"/>
</dbReference>
<dbReference type="Pfam" id="PF15300">
    <property type="entry name" value="INT_SG_DDX_CT_C"/>
    <property type="match status" value="1"/>
</dbReference>
<evidence type="ECO:0000305" key="1"/>
<evidence type="ECO:0000312" key="2">
    <source>
        <dbReference type="HGNC" id="HGNC:51262"/>
    </source>
</evidence>
<proteinExistence type="inferred from homology"/>
<keyword id="KW-1185">Reference proteome</keyword>
<comment type="similarity">
    <text>Belongs to the CT45 family.</text>
</comment>